<organism>
    <name type="scientific">Arabidopsis thaliana</name>
    <name type="common">Mouse-ear cress</name>
    <dbReference type="NCBI Taxonomy" id="3702"/>
    <lineage>
        <taxon>Eukaryota</taxon>
        <taxon>Viridiplantae</taxon>
        <taxon>Streptophyta</taxon>
        <taxon>Embryophyta</taxon>
        <taxon>Tracheophyta</taxon>
        <taxon>Spermatophyta</taxon>
        <taxon>Magnoliopsida</taxon>
        <taxon>eudicotyledons</taxon>
        <taxon>Gunneridae</taxon>
        <taxon>Pentapetalae</taxon>
        <taxon>rosids</taxon>
        <taxon>malvids</taxon>
        <taxon>Brassicales</taxon>
        <taxon>Brassicaceae</taxon>
        <taxon>Camelineae</taxon>
        <taxon>Arabidopsis</taxon>
    </lineage>
</organism>
<sequence>MATTLSSSSLFIQFRGRRYNSLSSFNNLQKRTVLSLSCALSSQGGDMIPPEGKSNDRNSAFDFKSYMIRKAESVSAALNVSVPLQEPLTIQEAVRYSLLAGGKRVRPLLCIAACELVGGDEATAMSAACAVEMIHTSSLIHDDLPCMDDADLRRGKPTNHKEFGEDMAVLAGDALLALAFEHMTFVSNGLVAPERMIRAVMELAKAIGTKGLVAGQVTDLCSQGLNPDDVGLERLEFIHLHKTAALLEAAAVLGAIMGGGTEEEIEKLRKYARCIGLLFQVVDDILDVTESTKELGKTAGKDVMAGKLTYPRLIGLERSREVAEKLRREAAEQLLGFDSDKAAPLVALASYIACRHN</sequence>
<comment type="function">
    <text evidence="1">Catalyzes the trans-addition of the three molecules of IPP onto DMAPP to form geranylgeranyl pyrophosphate.</text>
</comment>
<comment type="catalytic activity">
    <reaction>
        <text>isopentenyl diphosphate + dimethylallyl diphosphate = (2E)-geranyl diphosphate + diphosphate</text>
        <dbReference type="Rhea" id="RHEA:22408"/>
        <dbReference type="ChEBI" id="CHEBI:33019"/>
        <dbReference type="ChEBI" id="CHEBI:57623"/>
        <dbReference type="ChEBI" id="CHEBI:58057"/>
        <dbReference type="ChEBI" id="CHEBI:128769"/>
        <dbReference type="EC" id="2.5.1.1"/>
    </reaction>
</comment>
<comment type="catalytic activity">
    <reaction>
        <text>isopentenyl diphosphate + (2E)-geranyl diphosphate = (2E,6E)-farnesyl diphosphate + diphosphate</text>
        <dbReference type="Rhea" id="RHEA:19361"/>
        <dbReference type="ChEBI" id="CHEBI:33019"/>
        <dbReference type="ChEBI" id="CHEBI:58057"/>
        <dbReference type="ChEBI" id="CHEBI:128769"/>
        <dbReference type="ChEBI" id="CHEBI:175763"/>
        <dbReference type="EC" id="2.5.1.10"/>
    </reaction>
</comment>
<comment type="catalytic activity">
    <reaction>
        <text>isopentenyl diphosphate + (2E,6E)-farnesyl diphosphate = (2E,6E,10E)-geranylgeranyl diphosphate + diphosphate</text>
        <dbReference type="Rhea" id="RHEA:17653"/>
        <dbReference type="ChEBI" id="CHEBI:33019"/>
        <dbReference type="ChEBI" id="CHEBI:58756"/>
        <dbReference type="ChEBI" id="CHEBI:128769"/>
        <dbReference type="ChEBI" id="CHEBI:175763"/>
        <dbReference type="EC" id="2.5.1.29"/>
    </reaction>
</comment>
<comment type="cofactor">
    <cofactor evidence="1">
        <name>Mg(2+)</name>
        <dbReference type="ChEBI" id="CHEBI:18420"/>
    </cofactor>
    <text evidence="1">Binds 2 Mg(2+) ions per subunit.</text>
</comment>
<comment type="pathway">
    <text>Isoprenoid biosynthesis; farnesyl diphosphate biosynthesis; farnesyl diphosphate from geranyl diphosphate and isopentenyl diphosphate: step 1/1.</text>
</comment>
<comment type="pathway">
    <text>Isoprenoid biosynthesis; geranyl diphosphate biosynthesis; geranyl diphosphate from dimethylallyl diphosphate and isopentenyl diphosphate: step 1/1.</text>
</comment>
<comment type="pathway">
    <text>Isoprenoid biosynthesis; geranylgeranyl diphosphate biosynthesis; geranylgeranyl diphosphate from farnesyl diphosphate and isopentenyl diphosphate: step 1/1.</text>
</comment>
<comment type="subunit">
    <text evidence="1">Monomer.</text>
</comment>
<comment type="subcellular location">
    <subcellularLocation>
        <location evidence="5">Plastid</location>
        <location evidence="5">Chloroplast</location>
    </subcellularLocation>
</comment>
<comment type="similarity">
    <text evidence="5">Belongs to the FPP/GGPP synthase family.</text>
</comment>
<gene>
    <name type="ordered locus">At3g29430</name>
    <name type="ORF">MUO10.10</name>
</gene>
<feature type="transit peptide" description="Chloroplast" evidence="4">
    <location>
        <begin position="1"/>
        <end position="37"/>
    </location>
</feature>
<feature type="chain" id="PRO_0000402125" description="Geranylgeranyl pyrophosphate synthase 11, chloroplastic">
    <location>
        <begin position="38"/>
        <end position="357"/>
    </location>
</feature>
<feature type="binding site" evidence="2">
    <location>
        <position position="103"/>
    </location>
    <ligand>
        <name>isopentenyl diphosphate</name>
        <dbReference type="ChEBI" id="CHEBI:128769"/>
    </ligand>
</feature>
<feature type="binding site" evidence="2">
    <location>
        <position position="106"/>
    </location>
    <ligand>
        <name>isopentenyl diphosphate</name>
        <dbReference type="ChEBI" id="CHEBI:128769"/>
    </ligand>
</feature>
<feature type="binding site" evidence="3">
    <location>
        <position position="135"/>
    </location>
    <ligand>
        <name>isopentenyl diphosphate</name>
        <dbReference type="ChEBI" id="CHEBI:128769"/>
    </ligand>
</feature>
<feature type="binding site" evidence="2">
    <location>
        <position position="142"/>
    </location>
    <ligand>
        <name>Mg(2+)</name>
        <dbReference type="ChEBI" id="CHEBI:18420"/>
        <label>1</label>
    </ligand>
</feature>
<feature type="binding site" evidence="2">
    <location>
        <position position="142"/>
    </location>
    <ligand>
        <name>Mg(2+)</name>
        <dbReference type="ChEBI" id="CHEBI:18420"/>
        <label>2</label>
    </ligand>
</feature>
<feature type="binding site" evidence="2">
    <location>
        <position position="148"/>
    </location>
    <ligand>
        <name>Mg(2+)</name>
        <dbReference type="ChEBI" id="CHEBI:18420"/>
        <label>1</label>
    </ligand>
</feature>
<feature type="binding site" evidence="2">
    <location>
        <position position="148"/>
    </location>
    <ligand>
        <name>Mg(2+)</name>
        <dbReference type="ChEBI" id="CHEBI:18420"/>
        <label>2</label>
    </ligand>
</feature>
<feature type="binding site" evidence="1">
    <location>
        <position position="153"/>
    </location>
    <ligand>
        <name>dimethylallyl diphosphate</name>
        <dbReference type="ChEBI" id="CHEBI:57623"/>
    </ligand>
</feature>
<feature type="binding site" evidence="2">
    <location>
        <position position="154"/>
    </location>
    <ligand>
        <name>isopentenyl diphosphate</name>
        <dbReference type="ChEBI" id="CHEBI:128769"/>
    </ligand>
</feature>
<feature type="binding site" evidence="1">
    <location>
        <position position="242"/>
    </location>
    <ligand>
        <name>dimethylallyl diphosphate</name>
        <dbReference type="ChEBI" id="CHEBI:57623"/>
    </ligand>
</feature>
<feature type="binding site" evidence="1">
    <location>
        <position position="243"/>
    </location>
    <ligand>
        <name>dimethylallyl diphosphate</name>
        <dbReference type="ChEBI" id="CHEBI:57623"/>
    </ligand>
</feature>
<feature type="binding site" evidence="1">
    <location>
        <position position="280"/>
    </location>
    <ligand>
        <name>dimethylallyl diphosphate</name>
        <dbReference type="ChEBI" id="CHEBI:57623"/>
    </ligand>
</feature>
<feature type="binding site" evidence="1">
    <location>
        <position position="297"/>
    </location>
    <ligand>
        <name>dimethylallyl diphosphate</name>
        <dbReference type="ChEBI" id="CHEBI:57623"/>
    </ligand>
</feature>
<feature type="binding site" evidence="1">
    <location>
        <position position="307"/>
    </location>
    <ligand>
        <name>dimethylallyl diphosphate</name>
        <dbReference type="ChEBI" id="CHEBI:57623"/>
    </ligand>
</feature>
<name>GGPPB_ARATH</name>
<reference key="1">
    <citation type="journal article" date="2000" name="DNA Res.">
        <title>Structural analysis of Arabidopsis thaliana chromosome 3. II. Sequence features of the 4,251,695 bp regions covered by 90 P1, TAC and BAC clones.</title>
        <authorList>
            <person name="Kaneko T."/>
            <person name="Katoh T."/>
            <person name="Sato S."/>
            <person name="Nakamura Y."/>
            <person name="Asamizu E."/>
            <person name="Tabata S."/>
        </authorList>
    </citation>
    <scope>NUCLEOTIDE SEQUENCE [LARGE SCALE GENOMIC DNA]</scope>
    <source>
        <strain>cv. Columbia</strain>
    </source>
</reference>
<reference key="2">
    <citation type="journal article" date="2017" name="Plant J.">
        <title>Araport11: a complete reannotation of the Arabidopsis thaliana reference genome.</title>
        <authorList>
            <person name="Cheng C.Y."/>
            <person name="Krishnakumar V."/>
            <person name="Chan A.P."/>
            <person name="Thibaud-Nissen F."/>
            <person name="Schobel S."/>
            <person name="Town C.D."/>
        </authorList>
    </citation>
    <scope>GENOME REANNOTATION</scope>
    <source>
        <strain>cv. Columbia</strain>
    </source>
</reference>
<reference key="3">
    <citation type="submission" date="2005-05" db="EMBL/GenBank/DDBJ databases">
        <authorList>
            <person name="Underwood B.A."/>
            <person name="Xiao Y.-L."/>
            <person name="Moskal W.A. Jr."/>
            <person name="Monaghan E.L."/>
            <person name="Wang W."/>
            <person name="Redman J.C."/>
            <person name="Wu H.C."/>
            <person name="Utterback T."/>
            <person name="Town C.D."/>
        </authorList>
    </citation>
    <scope>NUCLEOTIDE SEQUENCE [LARGE SCALE MRNA]</scope>
    <source>
        <strain>cv. Columbia</strain>
    </source>
</reference>
<evidence type="ECO:0000250" key="1"/>
<evidence type="ECO:0000250" key="2">
    <source>
        <dbReference type="UniProtKB" id="P14324"/>
    </source>
</evidence>
<evidence type="ECO:0000250" key="3">
    <source>
        <dbReference type="UniProtKB" id="Q12051"/>
    </source>
</evidence>
<evidence type="ECO:0000255" key="4"/>
<evidence type="ECO:0000305" key="5"/>
<keyword id="KW-0125">Carotenoid biosynthesis</keyword>
<keyword id="KW-0150">Chloroplast</keyword>
<keyword id="KW-0414">Isoprene biosynthesis</keyword>
<keyword id="KW-0460">Magnesium</keyword>
<keyword id="KW-0479">Metal-binding</keyword>
<keyword id="KW-0934">Plastid</keyword>
<keyword id="KW-1185">Reference proteome</keyword>
<keyword id="KW-0808">Transferase</keyword>
<keyword id="KW-0809">Transit peptide</keyword>
<protein>
    <recommendedName>
        <fullName>Geranylgeranyl pyrophosphate synthase 11, chloroplastic</fullName>
        <shortName>GGPP synthase 11</shortName>
        <shortName>GGPS11</shortName>
        <ecNumber>2.5.1.-</ecNumber>
    </recommendedName>
    <alternativeName>
        <fullName>(2E,6E)-farnesyl diphosphate synthase 11</fullName>
    </alternativeName>
    <alternativeName>
        <fullName>Dimethylallyltranstransferase 11</fullName>
        <ecNumber>2.5.1.1</ecNumber>
    </alternativeName>
    <alternativeName>
        <fullName>Farnesyl diphosphate synthase 11</fullName>
    </alternativeName>
    <alternativeName>
        <fullName>Farnesyltranstransferase 11</fullName>
        <ecNumber>2.5.1.29</ecNumber>
    </alternativeName>
    <alternativeName>
        <fullName>Geranyltranstransferase 11</fullName>
        <ecNumber>2.5.1.10</ecNumber>
    </alternativeName>
</protein>
<proteinExistence type="evidence at transcript level"/>
<dbReference type="EC" id="2.5.1.-"/>
<dbReference type="EC" id="2.5.1.1"/>
<dbReference type="EC" id="2.5.1.29"/>
<dbReference type="EC" id="2.5.1.10"/>
<dbReference type="EMBL" id="AP001309">
    <property type="protein sequence ID" value="BAB02589.1"/>
    <property type="molecule type" value="Genomic_DNA"/>
</dbReference>
<dbReference type="EMBL" id="CP002686">
    <property type="protein sequence ID" value="AEE77583.1"/>
    <property type="molecule type" value="Genomic_DNA"/>
</dbReference>
<dbReference type="EMBL" id="DQ056612">
    <property type="protein sequence ID" value="AAY78760.1"/>
    <property type="molecule type" value="mRNA"/>
</dbReference>
<dbReference type="RefSeq" id="NP_189589.1">
    <property type="nucleotide sequence ID" value="NM_113869.2"/>
</dbReference>
<dbReference type="SMR" id="Q9LIA0"/>
<dbReference type="FunCoup" id="Q9LIA0">
    <property type="interactions" value="18"/>
</dbReference>
<dbReference type="STRING" id="3702.Q9LIA0"/>
<dbReference type="iPTMnet" id="Q9LIA0"/>
<dbReference type="PaxDb" id="3702-AT3G29430.1"/>
<dbReference type="ProteomicsDB" id="224786"/>
<dbReference type="EnsemblPlants" id="AT3G29430.1">
    <property type="protein sequence ID" value="AT3G29430.1"/>
    <property type="gene ID" value="AT3G29430"/>
</dbReference>
<dbReference type="GeneID" id="822604"/>
<dbReference type="Gramene" id="AT3G29430.1">
    <property type="protein sequence ID" value="AT3G29430.1"/>
    <property type="gene ID" value="AT3G29430"/>
</dbReference>
<dbReference type="KEGG" id="ath:AT3G29430"/>
<dbReference type="Araport" id="AT3G29430"/>
<dbReference type="TAIR" id="AT3G29430">
    <property type="gene designation" value="ATGGPS9"/>
</dbReference>
<dbReference type="eggNOG" id="KOG0776">
    <property type="taxonomic scope" value="Eukaryota"/>
</dbReference>
<dbReference type="HOGENOM" id="CLU_014015_0_0_1"/>
<dbReference type="InParanoid" id="Q9LIA0"/>
<dbReference type="OMA" id="TPERMIH"/>
<dbReference type="PhylomeDB" id="Q9LIA0"/>
<dbReference type="BioCyc" id="ARA:AT3G29430-MONOMER"/>
<dbReference type="BRENDA" id="2.5.1.81">
    <property type="organism ID" value="399"/>
</dbReference>
<dbReference type="UniPathway" id="UPA00259">
    <property type="reaction ID" value="UER00368"/>
</dbReference>
<dbReference type="UniPathway" id="UPA00260">
    <property type="reaction ID" value="UER00369"/>
</dbReference>
<dbReference type="UniPathway" id="UPA00389">
    <property type="reaction ID" value="UER00564"/>
</dbReference>
<dbReference type="PRO" id="PR:Q9LIA0"/>
<dbReference type="Proteomes" id="UP000006548">
    <property type="component" value="Chromosome 3"/>
</dbReference>
<dbReference type="ExpressionAtlas" id="Q9LIA0">
    <property type="expression patterns" value="baseline and differential"/>
</dbReference>
<dbReference type="GO" id="GO:0009507">
    <property type="term" value="C:chloroplast"/>
    <property type="evidence" value="ECO:0000314"/>
    <property type="project" value="TAIR"/>
</dbReference>
<dbReference type="GO" id="GO:0010287">
    <property type="term" value="C:plastoglobule"/>
    <property type="evidence" value="ECO:0000314"/>
    <property type="project" value="TAIR"/>
</dbReference>
<dbReference type="GO" id="GO:0004337">
    <property type="term" value="F:(2E,6E)-farnesyl diphosphate synthase activity"/>
    <property type="evidence" value="ECO:0007669"/>
    <property type="project" value="UniProtKB-EC"/>
</dbReference>
<dbReference type="GO" id="GO:0004161">
    <property type="term" value="F:dimethylallyltranstransferase activity"/>
    <property type="evidence" value="ECO:0007669"/>
    <property type="project" value="UniProtKB-EC"/>
</dbReference>
<dbReference type="GO" id="GO:0044687">
    <property type="term" value="F:geranylfarnesyl diphosphate synthase activity"/>
    <property type="evidence" value="ECO:0000314"/>
    <property type="project" value="TAIR"/>
</dbReference>
<dbReference type="GO" id="GO:0004311">
    <property type="term" value="F:geranylgeranyl diphosphate synthase activity"/>
    <property type="evidence" value="ECO:0007669"/>
    <property type="project" value="UniProtKB-EC"/>
</dbReference>
<dbReference type="GO" id="GO:0046872">
    <property type="term" value="F:metal ion binding"/>
    <property type="evidence" value="ECO:0007669"/>
    <property type="project" value="UniProtKB-KW"/>
</dbReference>
<dbReference type="GO" id="GO:0016117">
    <property type="term" value="P:carotenoid biosynthetic process"/>
    <property type="evidence" value="ECO:0007669"/>
    <property type="project" value="UniProtKB-KW"/>
</dbReference>
<dbReference type="GO" id="GO:0045337">
    <property type="term" value="P:farnesyl diphosphate biosynthetic process"/>
    <property type="evidence" value="ECO:0000314"/>
    <property type="project" value="TAIR"/>
</dbReference>
<dbReference type="GO" id="GO:0033384">
    <property type="term" value="P:geranyl diphosphate biosynthetic process"/>
    <property type="evidence" value="ECO:0007669"/>
    <property type="project" value="UniProtKB-UniPathway"/>
</dbReference>
<dbReference type="GO" id="GO:0033386">
    <property type="term" value="P:geranylgeranyl diphosphate biosynthetic process"/>
    <property type="evidence" value="ECO:0007669"/>
    <property type="project" value="UniProtKB-UniPathway"/>
</dbReference>
<dbReference type="CDD" id="cd00685">
    <property type="entry name" value="Trans_IPPS_HT"/>
    <property type="match status" value="1"/>
</dbReference>
<dbReference type="FunFam" id="1.10.600.10:FF:000001">
    <property type="entry name" value="Geranylgeranyl diphosphate synthase"/>
    <property type="match status" value="1"/>
</dbReference>
<dbReference type="Gene3D" id="1.10.600.10">
    <property type="entry name" value="Farnesyl Diphosphate Synthase"/>
    <property type="match status" value="1"/>
</dbReference>
<dbReference type="InterPro" id="IPR008949">
    <property type="entry name" value="Isoprenoid_synthase_dom_sf"/>
</dbReference>
<dbReference type="InterPro" id="IPR000092">
    <property type="entry name" value="Polyprenyl_synt"/>
</dbReference>
<dbReference type="InterPro" id="IPR033749">
    <property type="entry name" value="Polyprenyl_synt_CS"/>
</dbReference>
<dbReference type="InterPro" id="IPR053378">
    <property type="entry name" value="Prenyl_diphosphate_synthase"/>
</dbReference>
<dbReference type="NCBIfam" id="NF045485">
    <property type="entry name" value="FPPsyn"/>
    <property type="match status" value="1"/>
</dbReference>
<dbReference type="PANTHER" id="PTHR43281">
    <property type="entry name" value="FARNESYL DIPHOSPHATE SYNTHASE"/>
    <property type="match status" value="1"/>
</dbReference>
<dbReference type="PANTHER" id="PTHR43281:SF11">
    <property type="entry name" value="GERANYLGERANYL PYROPHOSPHATE SYNTHASE 11, CHLOROPLASTIC-RELATED"/>
    <property type="match status" value="1"/>
</dbReference>
<dbReference type="Pfam" id="PF00348">
    <property type="entry name" value="polyprenyl_synt"/>
    <property type="match status" value="1"/>
</dbReference>
<dbReference type="SFLD" id="SFLDS00005">
    <property type="entry name" value="Isoprenoid_Synthase_Type_I"/>
    <property type="match status" value="1"/>
</dbReference>
<dbReference type="SFLD" id="SFLDG01017">
    <property type="entry name" value="Polyprenyl_Transferase_Like"/>
    <property type="match status" value="1"/>
</dbReference>
<dbReference type="SUPFAM" id="SSF48576">
    <property type="entry name" value="Terpenoid synthases"/>
    <property type="match status" value="1"/>
</dbReference>
<dbReference type="PROSITE" id="PS00723">
    <property type="entry name" value="POLYPRENYL_SYNTHASE_1"/>
    <property type="match status" value="1"/>
</dbReference>
<dbReference type="PROSITE" id="PS00444">
    <property type="entry name" value="POLYPRENYL_SYNTHASE_2"/>
    <property type="match status" value="1"/>
</dbReference>
<accession>Q9LIA0</accession>